<feature type="chain" id="PRO_1000202036" description="Crossover junction endodeoxyribonuclease RuvC">
    <location>
        <begin position="1"/>
        <end position="164"/>
    </location>
</feature>
<feature type="active site" evidence="1">
    <location>
        <position position="7"/>
    </location>
</feature>
<feature type="active site" evidence="1">
    <location>
        <position position="67"/>
    </location>
</feature>
<feature type="active site" evidence="1">
    <location>
        <position position="139"/>
    </location>
</feature>
<feature type="binding site" evidence="1">
    <location>
        <position position="7"/>
    </location>
    <ligand>
        <name>Mg(2+)</name>
        <dbReference type="ChEBI" id="CHEBI:18420"/>
        <label>1</label>
    </ligand>
</feature>
<feature type="binding site" evidence="1">
    <location>
        <position position="67"/>
    </location>
    <ligand>
        <name>Mg(2+)</name>
        <dbReference type="ChEBI" id="CHEBI:18420"/>
        <label>2</label>
    </ligand>
</feature>
<feature type="binding site" evidence="1">
    <location>
        <position position="139"/>
    </location>
    <ligand>
        <name>Mg(2+)</name>
        <dbReference type="ChEBI" id="CHEBI:18420"/>
        <label>1</label>
    </ligand>
</feature>
<gene>
    <name evidence="1" type="primary">ruvC</name>
    <name type="ordered locus">GM21_0932</name>
</gene>
<comment type="function">
    <text evidence="1">The RuvA-RuvB-RuvC complex processes Holliday junction (HJ) DNA during genetic recombination and DNA repair. Endonuclease that resolves HJ intermediates. Cleaves cruciform DNA by making single-stranded nicks across the HJ at symmetrical positions within the homologous arms, yielding a 5'-phosphate and a 3'-hydroxyl group; requires a central core of homology in the junction. The consensus cleavage sequence is 5'-(A/T)TT(C/G)-3'. Cleavage occurs on the 3'-side of the TT dinucleotide at the point of strand exchange. HJ branch migration catalyzed by RuvA-RuvB allows RuvC to scan DNA until it finds its consensus sequence, where it cleaves and resolves the cruciform DNA.</text>
</comment>
<comment type="catalytic activity">
    <reaction evidence="1">
        <text>Endonucleolytic cleavage at a junction such as a reciprocal single-stranded crossover between two homologous DNA duplexes (Holliday junction).</text>
        <dbReference type="EC" id="3.1.21.10"/>
    </reaction>
</comment>
<comment type="cofactor">
    <cofactor evidence="1">
        <name>Mg(2+)</name>
        <dbReference type="ChEBI" id="CHEBI:18420"/>
    </cofactor>
    <text evidence="1">Binds 2 Mg(2+) ion per subunit.</text>
</comment>
<comment type="subunit">
    <text evidence="1">Homodimer which binds Holliday junction (HJ) DNA. The HJ becomes 2-fold symmetrical on binding to RuvC with unstacked arms; it has a different conformation from HJ DNA in complex with RuvA. In the full resolvosome a probable DNA-RuvA(4)-RuvB(12)-RuvC(2) complex forms which resolves the HJ.</text>
</comment>
<comment type="subcellular location">
    <subcellularLocation>
        <location evidence="1">Cytoplasm</location>
    </subcellularLocation>
</comment>
<comment type="similarity">
    <text evidence="1">Belongs to the RuvC family.</text>
</comment>
<sequence length="164" mass="17385">MIILGIDPGSRKTGYGIISKQGNRLIHVDNGAIFTQSAKDFPERLEKIFTGLSEIIAQYRPEVVAVEDVFLAKNAQSALKLGQARGAAIVAAVNVGLPVHEYTAMQVKQAVVGTGRAEKAQVQQMIKALLNLPEVAQEDASDALAVAICHAHSAGMSALLKGVR</sequence>
<name>RUVC_GEOSM</name>
<keyword id="KW-0963">Cytoplasm</keyword>
<keyword id="KW-0227">DNA damage</keyword>
<keyword id="KW-0233">DNA recombination</keyword>
<keyword id="KW-0234">DNA repair</keyword>
<keyword id="KW-0238">DNA-binding</keyword>
<keyword id="KW-0255">Endonuclease</keyword>
<keyword id="KW-0378">Hydrolase</keyword>
<keyword id="KW-0460">Magnesium</keyword>
<keyword id="KW-0479">Metal-binding</keyword>
<keyword id="KW-0540">Nuclease</keyword>
<reference key="1">
    <citation type="submission" date="2009-07" db="EMBL/GenBank/DDBJ databases">
        <title>Complete sequence of Geobacter sp. M21.</title>
        <authorList>
            <consortium name="US DOE Joint Genome Institute"/>
            <person name="Lucas S."/>
            <person name="Copeland A."/>
            <person name="Lapidus A."/>
            <person name="Glavina del Rio T."/>
            <person name="Dalin E."/>
            <person name="Tice H."/>
            <person name="Bruce D."/>
            <person name="Goodwin L."/>
            <person name="Pitluck S."/>
            <person name="Saunders E."/>
            <person name="Brettin T."/>
            <person name="Detter J.C."/>
            <person name="Han C."/>
            <person name="Larimer F."/>
            <person name="Land M."/>
            <person name="Hauser L."/>
            <person name="Kyrpides N."/>
            <person name="Ovchinnikova G."/>
            <person name="Lovley D."/>
        </authorList>
    </citation>
    <scope>NUCLEOTIDE SEQUENCE [LARGE SCALE GENOMIC DNA]</scope>
    <source>
        <strain>M21</strain>
    </source>
</reference>
<protein>
    <recommendedName>
        <fullName evidence="1">Crossover junction endodeoxyribonuclease RuvC</fullName>
        <ecNumber evidence="1">3.1.21.10</ecNumber>
    </recommendedName>
    <alternativeName>
        <fullName evidence="1">Holliday junction nuclease RuvC</fullName>
    </alternativeName>
    <alternativeName>
        <fullName evidence="1">Holliday junction resolvase RuvC</fullName>
    </alternativeName>
</protein>
<dbReference type="EC" id="3.1.21.10" evidence="1"/>
<dbReference type="EMBL" id="CP001661">
    <property type="protein sequence ID" value="ACT16999.1"/>
    <property type="molecule type" value="Genomic_DNA"/>
</dbReference>
<dbReference type="SMR" id="C6E1T0"/>
<dbReference type="STRING" id="443144.GM21_0932"/>
<dbReference type="KEGG" id="gem:GM21_0932"/>
<dbReference type="eggNOG" id="COG0817">
    <property type="taxonomic scope" value="Bacteria"/>
</dbReference>
<dbReference type="HOGENOM" id="CLU_091257_3_1_7"/>
<dbReference type="OrthoDB" id="9805499at2"/>
<dbReference type="GO" id="GO:0005737">
    <property type="term" value="C:cytoplasm"/>
    <property type="evidence" value="ECO:0007669"/>
    <property type="project" value="UniProtKB-SubCell"/>
</dbReference>
<dbReference type="GO" id="GO:0048476">
    <property type="term" value="C:Holliday junction resolvase complex"/>
    <property type="evidence" value="ECO:0007669"/>
    <property type="project" value="UniProtKB-UniRule"/>
</dbReference>
<dbReference type="GO" id="GO:0008821">
    <property type="term" value="F:crossover junction DNA endonuclease activity"/>
    <property type="evidence" value="ECO:0007669"/>
    <property type="project" value="UniProtKB-UniRule"/>
</dbReference>
<dbReference type="GO" id="GO:0003677">
    <property type="term" value="F:DNA binding"/>
    <property type="evidence" value="ECO:0007669"/>
    <property type="project" value="UniProtKB-KW"/>
</dbReference>
<dbReference type="GO" id="GO:0000287">
    <property type="term" value="F:magnesium ion binding"/>
    <property type="evidence" value="ECO:0007669"/>
    <property type="project" value="UniProtKB-UniRule"/>
</dbReference>
<dbReference type="GO" id="GO:0006310">
    <property type="term" value="P:DNA recombination"/>
    <property type="evidence" value="ECO:0007669"/>
    <property type="project" value="UniProtKB-UniRule"/>
</dbReference>
<dbReference type="GO" id="GO:0006281">
    <property type="term" value="P:DNA repair"/>
    <property type="evidence" value="ECO:0007669"/>
    <property type="project" value="UniProtKB-UniRule"/>
</dbReference>
<dbReference type="CDD" id="cd16962">
    <property type="entry name" value="RuvC"/>
    <property type="match status" value="1"/>
</dbReference>
<dbReference type="FunFam" id="3.30.420.10:FF:000002">
    <property type="entry name" value="Crossover junction endodeoxyribonuclease RuvC"/>
    <property type="match status" value="1"/>
</dbReference>
<dbReference type="Gene3D" id="3.30.420.10">
    <property type="entry name" value="Ribonuclease H-like superfamily/Ribonuclease H"/>
    <property type="match status" value="1"/>
</dbReference>
<dbReference type="HAMAP" id="MF_00034">
    <property type="entry name" value="RuvC"/>
    <property type="match status" value="1"/>
</dbReference>
<dbReference type="InterPro" id="IPR012337">
    <property type="entry name" value="RNaseH-like_sf"/>
</dbReference>
<dbReference type="InterPro" id="IPR036397">
    <property type="entry name" value="RNaseH_sf"/>
</dbReference>
<dbReference type="InterPro" id="IPR020563">
    <property type="entry name" value="X-over_junc_endoDNase_Mg_BS"/>
</dbReference>
<dbReference type="InterPro" id="IPR002176">
    <property type="entry name" value="X-over_junc_endoDNase_RuvC"/>
</dbReference>
<dbReference type="NCBIfam" id="NF000711">
    <property type="entry name" value="PRK00039.2-1"/>
    <property type="match status" value="1"/>
</dbReference>
<dbReference type="NCBIfam" id="TIGR00228">
    <property type="entry name" value="ruvC"/>
    <property type="match status" value="1"/>
</dbReference>
<dbReference type="PANTHER" id="PTHR30194">
    <property type="entry name" value="CROSSOVER JUNCTION ENDODEOXYRIBONUCLEASE RUVC"/>
    <property type="match status" value="1"/>
</dbReference>
<dbReference type="PANTHER" id="PTHR30194:SF3">
    <property type="entry name" value="CROSSOVER JUNCTION ENDODEOXYRIBONUCLEASE RUVC"/>
    <property type="match status" value="1"/>
</dbReference>
<dbReference type="Pfam" id="PF02075">
    <property type="entry name" value="RuvC"/>
    <property type="match status" value="1"/>
</dbReference>
<dbReference type="PRINTS" id="PR00696">
    <property type="entry name" value="RSOLVASERUVC"/>
</dbReference>
<dbReference type="SUPFAM" id="SSF53098">
    <property type="entry name" value="Ribonuclease H-like"/>
    <property type="match status" value="1"/>
</dbReference>
<dbReference type="PROSITE" id="PS01321">
    <property type="entry name" value="RUVC"/>
    <property type="match status" value="1"/>
</dbReference>
<proteinExistence type="inferred from homology"/>
<accession>C6E1T0</accession>
<evidence type="ECO:0000255" key="1">
    <source>
        <dbReference type="HAMAP-Rule" id="MF_00034"/>
    </source>
</evidence>
<organism>
    <name type="scientific">Geobacter sp. (strain M21)</name>
    <dbReference type="NCBI Taxonomy" id="443144"/>
    <lineage>
        <taxon>Bacteria</taxon>
        <taxon>Pseudomonadati</taxon>
        <taxon>Thermodesulfobacteriota</taxon>
        <taxon>Desulfuromonadia</taxon>
        <taxon>Geobacterales</taxon>
        <taxon>Geobacteraceae</taxon>
        <taxon>Geobacter</taxon>
    </lineage>
</organism>